<name>AAEB_SALPK</name>
<organism>
    <name type="scientific">Salmonella paratyphi A (strain AKU_12601)</name>
    <dbReference type="NCBI Taxonomy" id="554290"/>
    <lineage>
        <taxon>Bacteria</taxon>
        <taxon>Pseudomonadati</taxon>
        <taxon>Pseudomonadota</taxon>
        <taxon>Gammaproteobacteria</taxon>
        <taxon>Enterobacterales</taxon>
        <taxon>Enterobacteriaceae</taxon>
        <taxon>Salmonella</taxon>
    </lineage>
</organism>
<evidence type="ECO:0000255" key="1">
    <source>
        <dbReference type="HAMAP-Rule" id="MF_01545"/>
    </source>
</evidence>
<proteinExistence type="inferred from homology"/>
<reference key="1">
    <citation type="journal article" date="2009" name="BMC Genomics">
        <title>Pseudogene accumulation in the evolutionary histories of Salmonella enterica serovars Paratyphi A and Typhi.</title>
        <authorList>
            <person name="Holt K.E."/>
            <person name="Thomson N.R."/>
            <person name="Wain J."/>
            <person name="Langridge G.C."/>
            <person name="Hasan R."/>
            <person name="Bhutta Z.A."/>
            <person name="Quail M.A."/>
            <person name="Norbertczak H."/>
            <person name="Walker D."/>
            <person name="Simmonds M."/>
            <person name="White B."/>
            <person name="Bason N."/>
            <person name="Mungall K."/>
            <person name="Dougan G."/>
            <person name="Parkhill J."/>
        </authorList>
    </citation>
    <scope>NUCLEOTIDE SEQUENCE [LARGE SCALE GENOMIC DNA]</scope>
    <source>
        <strain>AKU_12601</strain>
    </source>
</reference>
<accession>B5BGR8</accession>
<keyword id="KW-0997">Cell inner membrane</keyword>
<keyword id="KW-1003">Cell membrane</keyword>
<keyword id="KW-0472">Membrane</keyword>
<keyword id="KW-0812">Transmembrane</keyword>
<keyword id="KW-1133">Transmembrane helix</keyword>
<keyword id="KW-0813">Transport</keyword>
<sequence length="655" mass="73732">MGIFSIANQHIRFAVKLACAIVLALFIGFHFQLETPRWAVLTAAIVAAGPAFAAGGEPYSGAIRYRGMLRIIGTFIGCIAALIIIISMIRAPLLMILVCCVWVGFCTWISSLVRIENSYAWGLSGYTALIIVITIQTEPLLTPQFALERCSEIVIGIGCAILADLLFSPRSIKQEVDRELDSLLVAQYQLMQLCIKHGDSEEVDNAWGDLVRRTAALEGMRSNLNMESSRWVRANRRLKALNTLSLTLITQSCETYLIQNTRPELITDTFRELFETPVETVQDVHRQLKRMRRVIVWTGERETPVTLYSWVGAATRYLLLKRGVISNTKISATEEEILQGEPVVKVESAERHHAMVNFWRTTLSCILGTLFWLWTGWTSGNGEMVMIAVVTSLAMRLPNPRMVCIDFIYGTLAALPLGLLYFLVIIPNTQQSMLLLCLSLAVLGFFIGIEVQKRRLGSMGALASTINIIVLDNPMTFHFSQFLDSALGQIVGCMLAFIVILLVRDKSKDRTGRVLLNQFVSAAVSAMTTNVVRRKENRLPALYQQLFLLMNKFPGDLPKFRLALTMIIAHQRLRDAPIPVNEDLSVFHRQLRRTADHVISAGSDDKRRRYFGQLLDELDIYQEKLRIWEAPPQVTEPVKRLTGMLHKYQNALTDS</sequence>
<comment type="function">
    <text evidence="1">Forms an efflux pump with AaeA. Could function as a metabolic relief valve, allowing to eliminate certain compounds when they accumulate to high levels in the cell.</text>
</comment>
<comment type="subcellular location">
    <subcellularLocation>
        <location evidence="1">Cell inner membrane</location>
        <topology evidence="1">Multi-pass membrane protein</topology>
    </subcellularLocation>
</comment>
<comment type="similarity">
    <text evidence="1">Belongs to the aromatic acid exporter ArAE (TC 2.A.85) family.</text>
</comment>
<feature type="chain" id="PRO_1000146746" description="p-hydroxybenzoic acid efflux pump subunit AaeB">
    <location>
        <begin position="1"/>
        <end position="655"/>
    </location>
</feature>
<feature type="transmembrane region" description="Helical" evidence="1">
    <location>
        <begin position="13"/>
        <end position="33"/>
    </location>
</feature>
<feature type="transmembrane region" description="Helical" evidence="1">
    <location>
        <begin position="38"/>
        <end position="58"/>
    </location>
</feature>
<feature type="transmembrane region" description="Helical" evidence="1">
    <location>
        <begin position="69"/>
        <end position="89"/>
    </location>
</feature>
<feature type="transmembrane region" description="Helical" evidence="1">
    <location>
        <begin position="93"/>
        <end position="113"/>
    </location>
</feature>
<feature type="transmembrane region" description="Helical" evidence="1">
    <location>
        <begin position="121"/>
        <end position="141"/>
    </location>
</feature>
<feature type="transmembrane region" description="Helical" evidence="1">
    <location>
        <begin position="152"/>
        <end position="172"/>
    </location>
</feature>
<feature type="transmembrane region" description="Helical" evidence="1">
    <location>
        <begin position="370"/>
        <end position="390"/>
    </location>
</feature>
<feature type="transmembrane region" description="Helical" evidence="1">
    <location>
        <begin position="407"/>
        <end position="427"/>
    </location>
</feature>
<feature type="transmembrane region" description="Helical" evidence="1">
    <location>
        <begin position="431"/>
        <end position="451"/>
    </location>
</feature>
<feature type="transmembrane region" description="Helical" evidence="1">
    <location>
        <begin position="459"/>
        <end position="479"/>
    </location>
</feature>
<feature type="transmembrane region" description="Helical" evidence="1">
    <location>
        <begin position="482"/>
        <end position="502"/>
    </location>
</feature>
<gene>
    <name evidence="1" type="primary">aaeB</name>
    <name type="ordered locus">SSPA3017</name>
</gene>
<protein>
    <recommendedName>
        <fullName evidence="1">p-hydroxybenzoic acid efflux pump subunit AaeB</fullName>
        <shortName evidence="1">pHBA efflux pump protein B</shortName>
    </recommendedName>
</protein>
<dbReference type="EMBL" id="FM200053">
    <property type="protein sequence ID" value="CAR61267.1"/>
    <property type="molecule type" value="Genomic_DNA"/>
</dbReference>
<dbReference type="RefSeq" id="WP_000510916.1">
    <property type="nucleotide sequence ID" value="NC_011147.1"/>
</dbReference>
<dbReference type="SMR" id="B5BGR8"/>
<dbReference type="KEGG" id="sek:SSPA3017"/>
<dbReference type="HOGENOM" id="CLU_027647_0_0_6"/>
<dbReference type="Proteomes" id="UP000001869">
    <property type="component" value="Chromosome"/>
</dbReference>
<dbReference type="GO" id="GO:0005886">
    <property type="term" value="C:plasma membrane"/>
    <property type="evidence" value="ECO:0007669"/>
    <property type="project" value="UniProtKB-SubCell"/>
</dbReference>
<dbReference type="GO" id="GO:0022857">
    <property type="term" value="F:transmembrane transporter activity"/>
    <property type="evidence" value="ECO:0007669"/>
    <property type="project" value="UniProtKB-UniRule"/>
</dbReference>
<dbReference type="GO" id="GO:0046942">
    <property type="term" value="P:carboxylic acid transport"/>
    <property type="evidence" value="ECO:0007669"/>
    <property type="project" value="InterPro"/>
</dbReference>
<dbReference type="HAMAP" id="MF_01545">
    <property type="entry name" value="AaeB"/>
    <property type="match status" value="1"/>
</dbReference>
<dbReference type="InterPro" id="IPR006726">
    <property type="entry name" value="PHBA_efflux_AaeB/fusaric-R"/>
</dbReference>
<dbReference type="InterPro" id="IPR023706">
    <property type="entry name" value="PHBA_efflux_pump_AaeB"/>
</dbReference>
<dbReference type="NCBIfam" id="NF007916">
    <property type="entry name" value="PRK10631.1"/>
    <property type="match status" value="1"/>
</dbReference>
<dbReference type="PANTHER" id="PTHR30509:SF9">
    <property type="entry name" value="MULTIDRUG RESISTANCE PROTEIN MDTO"/>
    <property type="match status" value="1"/>
</dbReference>
<dbReference type="PANTHER" id="PTHR30509">
    <property type="entry name" value="P-HYDROXYBENZOIC ACID EFFLUX PUMP SUBUNIT-RELATED"/>
    <property type="match status" value="1"/>
</dbReference>
<dbReference type="Pfam" id="PF04632">
    <property type="entry name" value="FUSC"/>
    <property type="match status" value="1"/>
</dbReference>